<protein>
    <recommendedName>
        <fullName>Forkhead box protein H1</fullName>
    </recommendedName>
    <alternativeName>
        <fullName>Forkhead activin signal transducer 1</fullName>
        <shortName>Fast-1</shortName>
    </alternativeName>
    <alternativeName>
        <fullName>Schmalspur protein</fullName>
    </alternativeName>
</protein>
<name>FOXH1_DANRE</name>
<gene>
    <name type="primary">foxh1</name>
    <name type="synonym">fast1</name>
    <name type="synonym">sur</name>
</gene>
<reference key="1">
    <citation type="journal article" date="2000" name="Curr. Biol.">
        <title>The zebrafish forkhead transcription factor FoxH1/Fast1 is a modulator of nodal signaling required for organizer formation.</title>
        <authorList>
            <person name="Pogoda H.-M."/>
            <person name="Solnica-Krezel L."/>
            <person name="Driever W."/>
            <person name="Meyer D."/>
        </authorList>
    </citation>
    <scope>NUCLEOTIDE SEQUENCE [MRNA]</scope>
    <scope>FUNCTION</scope>
    <scope>SUBCELLULAR LOCATION</scope>
    <scope>DEVELOPMENTAL STAGE</scope>
    <scope>MUTAGENESIS OF ARG-94 AND LYS-97</scope>
    <scope>DISRUPTION PHENOTYPE</scope>
</reference>
<reference key="2">
    <citation type="journal article" date="2000" name="Curr. Biol.">
        <title>Fast1 is required for the development of dorsal axial structures in zebrafish.</title>
        <authorList>
            <person name="Sirotkin H.I."/>
            <person name="Gates M.A."/>
            <person name="Kelly P.D."/>
            <person name="Schier A.F."/>
            <person name="Talbot W.S."/>
        </authorList>
    </citation>
    <scope>NUCLEOTIDE SEQUENCE [MRNA]</scope>
    <scope>FUNCTION</scope>
    <scope>DEVELOPMENTAL STAGE</scope>
    <scope>MUTAGENESIS OF ARG-94</scope>
    <source>
        <tissue>Embryo</tissue>
    </source>
</reference>
<reference key="3">
    <citation type="journal article" date="2000" name="Mech. Dev.">
        <title>Cloning and expression pattern of a zebrafish homolog of forkhead activin signal transducer (FAST), a transcription factor mediating Nodal-related signals.</title>
        <authorList>
            <person name="Boggetti B."/>
            <person name="Argenton F."/>
            <person name="Haffter P."/>
            <person name="Bianchi M.E."/>
            <person name="Cotelli F."/>
            <person name="Beltrame M."/>
        </authorList>
    </citation>
    <scope>NUCLEOTIDE SEQUENCE [MRNA]</scope>
    <scope>DEVELOPMENTAL STAGE</scope>
    <source>
        <tissue>Embryo</tissue>
    </source>
</reference>
<reference key="4">
    <citation type="submission" date="2003-01" db="EMBL/GenBank/DDBJ databases">
        <authorList>
            <consortium name="NIH - Zebrafish Gene Collection (ZGC) project"/>
        </authorList>
    </citation>
    <scope>NUCLEOTIDE SEQUENCE [LARGE SCALE MRNA]</scope>
    <source>
        <strain>AB</strain>
    </source>
</reference>
<dbReference type="EMBL" id="AF263000">
    <property type="protein sequence ID" value="AAF72712.1"/>
    <property type="molecule type" value="mRNA"/>
</dbReference>
<dbReference type="EMBL" id="AF264751">
    <property type="protein sequence ID" value="AAF81247.1"/>
    <property type="molecule type" value="mRNA"/>
</dbReference>
<dbReference type="EMBL" id="BC044340">
    <property type="protein sequence ID" value="AAH44340.1"/>
    <property type="molecule type" value="mRNA"/>
</dbReference>
<dbReference type="RefSeq" id="NP_571577.1">
    <property type="nucleotide sequence ID" value="NM_131502.1"/>
</dbReference>
<dbReference type="PDB" id="7YZ7">
    <property type="method" value="X-ray"/>
    <property type="resolution" value="0.98 A"/>
    <property type="chains" value="A=86-210"/>
</dbReference>
<dbReference type="PDB" id="7YZA">
    <property type="method" value="X-ray"/>
    <property type="resolution" value="1.18 A"/>
    <property type="chains" value="A=86-210"/>
</dbReference>
<dbReference type="PDB" id="7YZC">
    <property type="method" value="X-ray"/>
    <property type="resolution" value="2.17 A"/>
    <property type="chains" value="A=86-210"/>
</dbReference>
<dbReference type="PDB" id="7YZD">
    <property type="method" value="X-ray"/>
    <property type="resolution" value="2.13 A"/>
    <property type="chains" value="A=86-210"/>
</dbReference>
<dbReference type="PDBsum" id="7YZ7"/>
<dbReference type="PDBsum" id="7YZA"/>
<dbReference type="PDBsum" id="7YZC"/>
<dbReference type="PDBsum" id="7YZD"/>
<dbReference type="SMR" id="Q9I9E1"/>
<dbReference type="FunCoup" id="Q9I9E1">
    <property type="interactions" value="1575"/>
</dbReference>
<dbReference type="STRING" id="7955.ENSDARP00000072485"/>
<dbReference type="PaxDb" id="7955-ENSDARP00000127073"/>
<dbReference type="GeneID" id="57930"/>
<dbReference type="KEGG" id="dre:57930"/>
<dbReference type="AGR" id="ZFIN:ZDB-GENE-000616-15"/>
<dbReference type="CTD" id="8928"/>
<dbReference type="ZFIN" id="ZDB-GENE-000616-15">
    <property type="gene designation" value="foxh1"/>
</dbReference>
<dbReference type="eggNOG" id="KOG2294">
    <property type="taxonomic scope" value="Eukaryota"/>
</dbReference>
<dbReference type="InParanoid" id="Q9I9E1"/>
<dbReference type="OrthoDB" id="5954824at2759"/>
<dbReference type="PhylomeDB" id="Q9I9E1"/>
<dbReference type="PRO" id="PR:Q9I9E1"/>
<dbReference type="Proteomes" id="UP000000437">
    <property type="component" value="Chromosome 12"/>
</dbReference>
<dbReference type="GO" id="GO:0000785">
    <property type="term" value="C:chromatin"/>
    <property type="evidence" value="ECO:0000314"/>
    <property type="project" value="ZFIN"/>
</dbReference>
<dbReference type="GO" id="GO:0005634">
    <property type="term" value="C:nucleus"/>
    <property type="evidence" value="ECO:0000305"/>
    <property type="project" value="ZFIN"/>
</dbReference>
<dbReference type="GO" id="GO:0005667">
    <property type="term" value="C:transcription regulator complex"/>
    <property type="evidence" value="ECO:0000304"/>
    <property type="project" value="ZFIN"/>
</dbReference>
<dbReference type="GO" id="GO:0000981">
    <property type="term" value="F:DNA-binding transcription factor activity, RNA polymerase II-specific"/>
    <property type="evidence" value="ECO:0000314"/>
    <property type="project" value="ZFIN"/>
</dbReference>
<dbReference type="GO" id="GO:0001227">
    <property type="term" value="F:DNA-binding transcription repressor activity, RNA polymerase II-specific"/>
    <property type="evidence" value="ECO:0000314"/>
    <property type="project" value="ZFIN"/>
</dbReference>
<dbReference type="GO" id="GO:0000978">
    <property type="term" value="F:RNA polymerase II cis-regulatory region sequence-specific DNA binding"/>
    <property type="evidence" value="ECO:0000318"/>
    <property type="project" value="GO_Central"/>
</dbReference>
<dbReference type="GO" id="GO:0000977">
    <property type="term" value="F:RNA polymerase II transcription regulatory region sequence-specific DNA binding"/>
    <property type="evidence" value="ECO:0000314"/>
    <property type="project" value="ZFIN"/>
</dbReference>
<dbReference type="GO" id="GO:0043565">
    <property type="term" value="F:sequence-specific DNA binding"/>
    <property type="evidence" value="ECO:0000314"/>
    <property type="project" value="ZFIN"/>
</dbReference>
<dbReference type="GO" id="GO:0046332">
    <property type="term" value="F:SMAD binding"/>
    <property type="evidence" value="ECO:0000315"/>
    <property type="project" value="ZFIN"/>
</dbReference>
<dbReference type="GO" id="GO:0000976">
    <property type="term" value="F:transcription cis-regulatory region binding"/>
    <property type="evidence" value="ECO:0000314"/>
    <property type="project" value="ZFIN"/>
</dbReference>
<dbReference type="GO" id="GO:0009653">
    <property type="term" value="P:anatomical structure morphogenesis"/>
    <property type="evidence" value="ECO:0000318"/>
    <property type="project" value="GO_Central"/>
</dbReference>
<dbReference type="GO" id="GO:0048319">
    <property type="term" value="P:axial mesoderm morphogenesis"/>
    <property type="evidence" value="ECO:0000315"/>
    <property type="project" value="ZFIN"/>
</dbReference>
<dbReference type="GO" id="GO:0048327">
    <property type="term" value="P:axial mesodermal cell fate specification"/>
    <property type="evidence" value="ECO:0000315"/>
    <property type="project" value="ZFIN"/>
</dbReference>
<dbReference type="GO" id="GO:0001568">
    <property type="term" value="P:blood vessel development"/>
    <property type="evidence" value="ECO:0000315"/>
    <property type="project" value="ZFIN"/>
</dbReference>
<dbReference type="GO" id="GO:0048854">
    <property type="term" value="P:brain morphogenesis"/>
    <property type="evidence" value="ECO:0000315"/>
    <property type="project" value="ZFIN"/>
</dbReference>
<dbReference type="GO" id="GO:0030154">
    <property type="term" value="P:cell differentiation"/>
    <property type="evidence" value="ECO:0000318"/>
    <property type="project" value="GO_Central"/>
</dbReference>
<dbReference type="GO" id="GO:0042074">
    <property type="term" value="P:cell migration involved in gastrulation"/>
    <property type="evidence" value="ECO:0000315"/>
    <property type="project" value="ZFIN"/>
</dbReference>
<dbReference type="GO" id="GO:0071345">
    <property type="term" value="P:cellular response to cytokine stimulus"/>
    <property type="evidence" value="ECO:0000250"/>
    <property type="project" value="UniProtKB"/>
</dbReference>
<dbReference type="GO" id="GO:0007368">
    <property type="term" value="P:determination of left/right symmetry"/>
    <property type="evidence" value="ECO:0000315"/>
    <property type="project" value="ZFIN"/>
</dbReference>
<dbReference type="GO" id="GO:0009953">
    <property type="term" value="P:dorsal/ventral pattern formation"/>
    <property type="evidence" value="ECO:0000315"/>
    <property type="project" value="ZFIN"/>
</dbReference>
<dbReference type="GO" id="GO:0060971">
    <property type="term" value="P:embryonic heart tube left/right pattern formation"/>
    <property type="evidence" value="ECO:0000315"/>
    <property type="project" value="ZFIN"/>
</dbReference>
<dbReference type="GO" id="GO:0003143">
    <property type="term" value="P:embryonic heart tube morphogenesis"/>
    <property type="evidence" value="ECO:0000315"/>
    <property type="project" value="ZFIN"/>
</dbReference>
<dbReference type="GO" id="GO:0001706">
    <property type="term" value="P:endoderm formation"/>
    <property type="evidence" value="ECO:0000315"/>
    <property type="project" value="ZFIN"/>
</dbReference>
<dbReference type="GO" id="GO:0033504">
    <property type="term" value="P:floor plate development"/>
    <property type="evidence" value="ECO:0000315"/>
    <property type="project" value="ZFIN"/>
</dbReference>
<dbReference type="GO" id="GO:0021508">
    <property type="term" value="P:floor plate formation"/>
    <property type="evidence" value="ECO:0000315"/>
    <property type="project" value="ZFIN"/>
</dbReference>
<dbReference type="GO" id="GO:0001947">
    <property type="term" value="P:heart looping"/>
    <property type="evidence" value="ECO:0000315"/>
    <property type="project" value="ZFIN"/>
</dbReference>
<dbReference type="GO" id="GO:0021854">
    <property type="term" value="P:hypothalamus development"/>
    <property type="evidence" value="ECO:0000315"/>
    <property type="project" value="ZFIN"/>
</dbReference>
<dbReference type="GO" id="GO:0046619">
    <property type="term" value="P:lens placode formation involved in camera-type eye formation"/>
    <property type="evidence" value="ECO:0000315"/>
    <property type="project" value="ZFIN"/>
</dbReference>
<dbReference type="GO" id="GO:0048382">
    <property type="term" value="P:mesendoderm development"/>
    <property type="evidence" value="ECO:0000316"/>
    <property type="project" value="ZFIN"/>
</dbReference>
<dbReference type="GO" id="GO:0001707">
    <property type="term" value="P:mesoderm formation"/>
    <property type="evidence" value="ECO:0000315"/>
    <property type="project" value="ZFIN"/>
</dbReference>
<dbReference type="GO" id="GO:0000122">
    <property type="term" value="P:negative regulation of transcription by RNA polymerase II"/>
    <property type="evidence" value="ECO:0000314"/>
    <property type="project" value="ZFIN"/>
</dbReference>
<dbReference type="GO" id="GO:0030903">
    <property type="term" value="P:notochord development"/>
    <property type="evidence" value="ECO:0000315"/>
    <property type="project" value="ZFIN"/>
</dbReference>
<dbReference type="GO" id="GO:0014028">
    <property type="term" value="P:notochord formation"/>
    <property type="evidence" value="ECO:0000315"/>
    <property type="project" value="ZFIN"/>
</dbReference>
<dbReference type="GO" id="GO:0045944">
    <property type="term" value="P:positive regulation of transcription by RNA polymerase II"/>
    <property type="evidence" value="ECO:0000250"/>
    <property type="project" value="UniProtKB"/>
</dbReference>
<dbReference type="GO" id="GO:0021501">
    <property type="term" value="P:prechordal plate formation"/>
    <property type="evidence" value="ECO:0000315"/>
    <property type="project" value="ZFIN"/>
</dbReference>
<dbReference type="GO" id="GO:0030510">
    <property type="term" value="P:regulation of BMP signaling pathway"/>
    <property type="evidence" value="ECO:0000315"/>
    <property type="project" value="ZFIN"/>
</dbReference>
<dbReference type="GO" id="GO:0010468">
    <property type="term" value="P:regulation of gene expression"/>
    <property type="evidence" value="ECO:0000315"/>
    <property type="project" value="ZFIN"/>
</dbReference>
<dbReference type="GO" id="GO:0006357">
    <property type="term" value="P:regulation of transcription by RNA polymerase II"/>
    <property type="evidence" value="ECO:0000316"/>
    <property type="project" value="ZFIN"/>
</dbReference>
<dbReference type="GO" id="GO:0032525">
    <property type="term" value="P:somite rostral/caudal axis specification"/>
    <property type="evidence" value="ECO:0000315"/>
    <property type="project" value="ZFIN"/>
</dbReference>
<dbReference type="GO" id="GO:0010159">
    <property type="term" value="P:specification of animal organ position"/>
    <property type="evidence" value="ECO:0000315"/>
    <property type="project" value="ZFIN"/>
</dbReference>
<dbReference type="GO" id="GO:0060063">
    <property type="term" value="P:Spemann organizer formation at the embryonic shield"/>
    <property type="evidence" value="ECO:0000315"/>
    <property type="project" value="ZFIN"/>
</dbReference>
<dbReference type="CDD" id="cd20022">
    <property type="entry name" value="FH_FOXH"/>
    <property type="match status" value="1"/>
</dbReference>
<dbReference type="FunFam" id="1.10.10.10:FF:000278">
    <property type="entry name" value="Forkhead box protein H1"/>
    <property type="match status" value="1"/>
</dbReference>
<dbReference type="Gene3D" id="1.10.10.10">
    <property type="entry name" value="Winged helix-like DNA-binding domain superfamily/Winged helix DNA-binding domain"/>
    <property type="match status" value="1"/>
</dbReference>
<dbReference type="InterPro" id="IPR052327">
    <property type="entry name" value="Activin_resp_transcr_regulator"/>
</dbReference>
<dbReference type="InterPro" id="IPR047511">
    <property type="entry name" value="FH_FOXH1"/>
</dbReference>
<dbReference type="InterPro" id="IPR001766">
    <property type="entry name" value="Fork_head_dom"/>
</dbReference>
<dbReference type="InterPro" id="IPR030456">
    <property type="entry name" value="TF_fork_head_CS_2"/>
</dbReference>
<dbReference type="InterPro" id="IPR036388">
    <property type="entry name" value="WH-like_DNA-bd_sf"/>
</dbReference>
<dbReference type="InterPro" id="IPR036390">
    <property type="entry name" value="WH_DNA-bd_sf"/>
</dbReference>
<dbReference type="PANTHER" id="PTHR47316">
    <property type="entry name" value="FORKHEAD BOX PROTEIN H1"/>
    <property type="match status" value="1"/>
</dbReference>
<dbReference type="PANTHER" id="PTHR47316:SF1">
    <property type="entry name" value="FORKHEAD BOX PROTEIN H1"/>
    <property type="match status" value="1"/>
</dbReference>
<dbReference type="Pfam" id="PF00250">
    <property type="entry name" value="Forkhead"/>
    <property type="match status" value="1"/>
</dbReference>
<dbReference type="PRINTS" id="PR00053">
    <property type="entry name" value="FORKHEAD"/>
</dbReference>
<dbReference type="SMART" id="SM00339">
    <property type="entry name" value="FH"/>
    <property type="match status" value="1"/>
</dbReference>
<dbReference type="SUPFAM" id="SSF46785">
    <property type="entry name" value="Winged helix' DNA-binding domain"/>
    <property type="match status" value="1"/>
</dbReference>
<dbReference type="PROSITE" id="PS00658">
    <property type="entry name" value="FORK_HEAD_2"/>
    <property type="match status" value="1"/>
</dbReference>
<dbReference type="PROSITE" id="PS50039">
    <property type="entry name" value="FORK_HEAD_3"/>
    <property type="match status" value="1"/>
</dbReference>
<keyword id="KW-0002">3D-structure</keyword>
<keyword id="KW-0010">Activator</keyword>
<keyword id="KW-0238">DNA-binding</keyword>
<keyword id="KW-0539">Nucleus</keyword>
<keyword id="KW-1185">Reference proteome</keyword>
<keyword id="KW-0804">Transcription</keyword>
<keyword id="KW-0805">Transcription regulation</keyword>
<organism>
    <name type="scientific">Danio rerio</name>
    <name type="common">Zebrafish</name>
    <name type="synonym">Brachydanio rerio</name>
    <dbReference type="NCBI Taxonomy" id="7955"/>
    <lineage>
        <taxon>Eukaryota</taxon>
        <taxon>Metazoa</taxon>
        <taxon>Chordata</taxon>
        <taxon>Craniata</taxon>
        <taxon>Vertebrata</taxon>
        <taxon>Euteleostomi</taxon>
        <taxon>Actinopterygii</taxon>
        <taxon>Neopterygii</taxon>
        <taxon>Teleostei</taxon>
        <taxon>Ostariophysi</taxon>
        <taxon>Cypriniformes</taxon>
        <taxon>Danionidae</taxon>
        <taxon>Danioninae</taxon>
        <taxon>Danio</taxon>
    </lineage>
</organism>
<feature type="chain" id="PRO_0000091844" description="Forkhead box protein H1">
    <location>
        <begin position="1"/>
        <end position="472"/>
    </location>
</feature>
<feature type="DNA-binding region" description="Fork-head" evidence="2">
    <location>
        <begin position="97"/>
        <end position="193"/>
    </location>
</feature>
<feature type="region of interest" description="Disordered" evidence="3">
    <location>
        <begin position="36"/>
        <end position="56"/>
    </location>
</feature>
<feature type="region of interest" description="Disordered" evidence="3">
    <location>
        <begin position="211"/>
        <end position="246"/>
    </location>
</feature>
<feature type="region of interest" description="Disordered" evidence="3">
    <location>
        <begin position="261"/>
        <end position="360"/>
    </location>
</feature>
<feature type="region of interest" description="SMAD-interaction domain (SID)">
    <location>
        <begin position="339"/>
        <end position="465"/>
    </location>
</feature>
<feature type="short sequence motif" description="Fast/FoxH1 motif 1 (FM1)">
    <location>
        <begin position="357"/>
        <end position="361"/>
    </location>
</feature>
<feature type="short sequence motif" description="Fast/FoxH1 motif 2 (FM2)">
    <location>
        <begin position="367"/>
        <end position="373"/>
    </location>
</feature>
<feature type="short sequence motif" description="SMAD interaction motif (SIM)">
    <location>
        <begin position="428"/>
        <end position="448"/>
    </location>
</feature>
<feature type="compositionally biased region" description="Pro residues" evidence="3">
    <location>
        <begin position="219"/>
        <end position="239"/>
    </location>
</feature>
<feature type="compositionally biased region" description="Low complexity" evidence="3">
    <location>
        <begin position="294"/>
        <end position="310"/>
    </location>
</feature>
<feature type="mutagenesis site" description="In sur(m768); loss of function." evidence="4 5">
    <original>R</original>
    <variation>H</variation>
    <location>
        <position position="94"/>
    </location>
</feature>
<feature type="mutagenesis site" description="In sur(ty68b); loss of function." evidence="4">
    <original>K</original>
    <variation>N</variation>
    <location>
        <position position="97"/>
    </location>
</feature>
<feature type="sequence conflict" description="In Ref. 3; AAF81247." evidence="7" ref="3">
    <original>Q</original>
    <variation>H</variation>
    <location>
        <position position="233"/>
    </location>
</feature>
<feature type="sequence conflict" description="In Ref. 3; AAF81247." evidence="7" ref="3">
    <original>G</original>
    <variation>R</variation>
    <location>
        <position position="318"/>
    </location>
</feature>
<feature type="sequence conflict" description="In Ref. 3; AAF81247." evidence="7" ref="3">
    <original>G</original>
    <variation>S</variation>
    <location>
        <position position="395"/>
    </location>
</feature>
<feature type="helix" evidence="8">
    <location>
        <begin position="102"/>
        <end position="111"/>
    </location>
</feature>
<feature type="helix" evidence="8">
    <location>
        <begin position="120"/>
        <end position="130"/>
    </location>
</feature>
<feature type="helix" evidence="8">
    <location>
        <begin position="132"/>
        <end position="135"/>
    </location>
</feature>
<feature type="helix" evidence="8">
    <location>
        <begin position="141"/>
        <end position="151"/>
    </location>
</feature>
<feature type="strand" evidence="8">
    <location>
        <begin position="155"/>
        <end position="158"/>
    </location>
</feature>
<feature type="strand" evidence="9">
    <location>
        <begin position="160"/>
        <end position="163"/>
    </location>
</feature>
<feature type="strand" evidence="8">
    <location>
        <begin position="171"/>
        <end position="174"/>
    </location>
</feature>
<feature type="helix" evidence="8">
    <location>
        <begin position="176"/>
        <end position="178"/>
    </location>
</feature>
<feature type="helix" evidence="8">
    <location>
        <begin position="181"/>
        <end position="184"/>
    </location>
</feature>
<feature type="helix" evidence="8">
    <location>
        <begin position="190"/>
        <end position="194"/>
    </location>
</feature>
<feature type="helix" evidence="8">
    <location>
        <begin position="196"/>
        <end position="198"/>
    </location>
</feature>
<feature type="strand" evidence="8">
    <location>
        <begin position="201"/>
        <end position="203"/>
    </location>
</feature>
<feature type="helix" evidence="8">
    <location>
        <begin position="204"/>
        <end position="206"/>
    </location>
</feature>
<sequence length="472" mass="51620">MTKHWGGPGLLAPPVITVGEGAQRDHHLDCRIGYSSSKRSCHRSSNPLLELGGRLDKSTGMAQDSCYRAKATNQGPWELQDGNSSGGKKKNYQRYPKPPYSYLAMIAMVIQNSPEKKLTLSEILKEISTLFPFFKGNYKGWRDSVRHNLSSYDCFVKVLKDPGKPQGKGNFWTVEVNRIPLELLKRQNTAVSRQDETIFAQDLAPYIFQGYSQPNKSKPLPPESSLPPVPTRQSPPPSEDPYRPKLDSTFAIDSLLHSLRPASSAGEGLRERESWGVGPPPHTRSTTPPRPCNASYNGSSSASSVSPASDFSDEDWRGVTVVGKRSGDRGITSDAYSDSCPPPNKSSKRGNTPPWELPTSYAKYTPPNAVAPPSMRFNGNPFMPLGGIPFYGYGGAHVTTSHLIGHPYWPILPSGPVSIQAPPLLMDLDSMLQSVPPNKSVFDALGSNNQTVHPSPNQYALQNGPSLCKYSL</sequence>
<evidence type="ECO:0000250" key="1"/>
<evidence type="ECO:0000255" key="2">
    <source>
        <dbReference type="PROSITE-ProRule" id="PRU00089"/>
    </source>
</evidence>
<evidence type="ECO:0000256" key="3">
    <source>
        <dbReference type="SAM" id="MobiDB-lite"/>
    </source>
</evidence>
<evidence type="ECO:0000269" key="4">
    <source>
    </source>
</evidence>
<evidence type="ECO:0000269" key="5">
    <source>
    </source>
</evidence>
<evidence type="ECO:0000269" key="6">
    <source>
    </source>
</evidence>
<evidence type="ECO:0000305" key="7"/>
<evidence type="ECO:0007829" key="8">
    <source>
        <dbReference type="PDB" id="7YZ7"/>
    </source>
</evidence>
<evidence type="ECO:0007829" key="9">
    <source>
        <dbReference type="PDB" id="7YZD"/>
    </source>
</evidence>
<proteinExistence type="evidence at protein level"/>
<comment type="function">
    <text evidence="4 5">Transcriptional activator. Activates an activin response element (ARE). Recognizes and binds to the DNA sequence 5'-TGT[GT][GT]ATT-3'. Modulator of nodal signaling required for organizer formation. Also required for the development of dorsal axial structures and left-right symmetry.</text>
</comment>
<comment type="subcellular location">
    <subcellularLocation>
        <location evidence="2 4">Nucleus</location>
    </subcellularLocation>
</comment>
<comment type="developmental stage">
    <text evidence="4 5 6">Expressed both maternally and zygotically. Localized to the prospective animal pole during oogenesis. Ubiquitous expression during the blastula stages. During early gastrulation, levels are higher ventrally and in the presumptive shield (organizer region). Later in gastrulation, expression is restricted to midline and ventral cells. At the start of somatogenesis, expression is restricted to notochord, lateral plate mesoderm and a stripe of anterior dorsal neuroectoderm. By the 19-somite stage, expression in the lateral plate and midline diminishes but forebrain expression persists. All expression is lost by 24 hours post-fertilization (hpf).</text>
</comment>
<comment type="domain">
    <text evidence="1">The FM region is required for binding smad2/smad4 complexes. FM2 is more effective than FM1 and only interacts with phosphorylated smad2 that is in an activated smad complex (By similarity).</text>
</comment>
<comment type="disruption phenotype">
    <text evidence="4">Fishes exhibit ventral body curvature, reduced spacing of the eyes, and absence or reduction of ventral neuroectoderm, including the floor plate.</text>
</comment>
<accession>Q9I9E1</accession>
<accession>Q9I8K6</accession>